<reference key="1">
    <citation type="journal article" date="1998" name="DNA Res.">
        <title>Complete sequence and gene organization of the genome of a hyper-thermophilic archaebacterium, Pyrococcus horikoshii OT3.</title>
        <authorList>
            <person name="Kawarabayasi Y."/>
            <person name="Sawada M."/>
            <person name="Horikawa H."/>
            <person name="Haikawa Y."/>
            <person name="Hino Y."/>
            <person name="Yamamoto S."/>
            <person name="Sekine M."/>
            <person name="Baba S."/>
            <person name="Kosugi H."/>
            <person name="Hosoyama A."/>
            <person name="Nagai Y."/>
            <person name="Sakai M."/>
            <person name="Ogura K."/>
            <person name="Otsuka R."/>
            <person name="Nakazawa H."/>
            <person name="Takamiya M."/>
            <person name="Ohfuku Y."/>
            <person name="Funahashi T."/>
            <person name="Tanaka T."/>
            <person name="Kudoh Y."/>
            <person name="Yamazaki J."/>
            <person name="Kushida N."/>
            <person name="Oguchi A."/>
            <person name="Aoki K."/>
            <person name="Yoshizawa T."/>
            <person name="Nakamura Y."/>
            <person name="Robb F.T."/>
            <person name="Horikoshi K."/>
            <person name="Masuchi Y."/>
            <person name="Shizuya H."/>
            <person name="Kikuchi H."/>
        </authorList>
    </citation>
    <scope>NUCLEOTIDE SEQUENCE [LARGE SCALE GENOMIC DNA]</scope>
    <source>
        <strain>ATCC 700860 / DSM 12428 / JCM 9974 / NBRC 100139 / OT-3</strain>
    </source>
</reference>
<sequence>MKLDEPIIAINFKTYIEATGKRALEIAKAAERVYKETGVTIVVAPQLVDLRMIAENVEIPVFAQHIDPIKPGSHTGHVLPEAVKEAGAVGTLLNHSENRMILADLEAAISRAKEVGLITMVCSNNPAVSAAVAALEPDYVAVEPPELIGTGIPVSKAKPEVITNTVELVRKVNPKVKVLCGAGISTGEDVRKAIELGTVGVLLASGVTKAKDPEKAIRDLVSGIIGKD</sequence>
<name>TPIS_PYRHO</name>
<comment type="function">
    <text evidence="1">Involved in the gluconeogenesis. Catalyzes stereospecifically the conversion of dihydroxyacetone phosphate (DHAP) to D-glyceraldehyde-3-phosphate (G3P).</text>
</comment>
<comment type="catalytic activity">
    <reaction evidence="1">
        <text>D-glyceraldehyde 3-phosphate = dihydroxyacetone phosphate</text>
        <dbReference type="Rhea" id="RHEA:18585"/>
        <dbReference type="ChEBI" id="CHEBI:57642"/>
        <dbReference type="ChEBI" id="CHEBI:59776"/>
        <dbReference type="EC" id="5.3.1.1"/>
    </reaction>
</comment>
<comment type="pathway">
    <text evidence="1">Carbohydrate biosynthesis; gluconeogenesis.</text>
</comment>
<comment type="pathway">
    <text evidence="1">Carbohydrate degradation; glycolysis; D-glyceraldehyde 3-phosphate from glycerone phosphate: step 1/1.</text>
</comment>
<comment type="subunit">
    <text evidence="1">Homotetramer; dimer of dimers.</text>
</comment>
<comment type="subcellular location">
    <subcellularLocation>
        <location evidence="1">Cytoplasm</location>
    </subcellularLocation>
</comment>
<comment type="similarity">
    <text evidence="1">Belongs to the triosephosphate isomerase family.</text>
</comment>
<comment type="sequence caution" evidence="2">
    <conflict type="erroneous initiation">
        <sequence resource="EMBL-CDS" id="BAA31006"/>
    </conflict>
</comment>
<gene>
    <name evidence="1" type="primary">tpiA</name>
    <name type="ordered locus">PH1884</name>
</gene>
<evidence type="ECO:0000255" key="1">
    <source>
        <dbReference type="HAMAP-Rule" id="MF_00147"/>
    </source>
</evidence>
<evidence type="ECO:0000305" key="2"/>
<feature type="chain" id="PRO_0000090342" description="Triosephosphate isomerase">
    <location>
        <begin position="1"/>
        <end position="228"/>
    </location>
</feature>
<feature type="active site" description="Electrophile" evidence="1">
    <location>
        <position position="95"/>
    </location>
</feature>
<feature type="active site" description="Proton acceptor" evidence="1">
    <location>
        <position position="143"/>
    </location>
</feature>
<feature type="binding site" evidence="1">
    <location>
        <begin position="11"/>
        <end position="13"/>
    </location>
    <ligand>
        <name>substrate</name>
    </ligand>
</feature>
<feature type="binding site" evidence="1">
    <location>
        <position position="148"/>
    </location>
    <ligand>
        <name>substrate</name>
    </ligand>
</feature>
<feature type="binding site" evidence="1">
    <location>
        <position position="183"/>
    </location>
    <ligand>
        <name>substrate</name>
    </ligand>
</feature>
<feature type="binding site" evidence="1">
    <location>
        <begin position="204"/>
        <end position="205"/>
    </location>
    <ligand>
        <name>substrate</name>
    </ligand>
</feature>
<proteinExistence type="inferred from homology"/>
<keyword id="KW-0963">Cytoplasm</keyword>
<keyword id="KW-0312">Gluconeogenesis</keyword>
<keyword id="KW-0324">Glycolysis</keyword>
<keyword id="KW-0413">Isomerase</keyword>
<protein>
    <recommendedName>
        <fullName evidence="1">Triosephosphate isomerase</fullName>
        <shortName evidence="1">TIM</shortName>
        <shortName evidence="1">TPI</shortName>
        <ecNumber evidence="1">5.3.1.1</ecNumber>
    </recommendedName>
    <alternativeName>
        <fullName evidence="1">Triose-phosphate isomerase</fullName>
    </alternativeName>
</protein>
<dbReference type="EC" id="5.3.1.1" evidence="1"/>
<dbReference type="EMBL" id="BA000001">
    <property type="protein sequence ID" value="BAA31006.1"/>
    <property type="status" value="ALT_INIT"/>
    <property type="molecule type" value="Genomic_DNA"/>
</dbReference>
<dbReference type="PIR" id="G71201">
    <property type="entry name" value="G71201"/>
</dbReference>
<dbReference type="RefSeq" id="WP_048053504.1">
    <property type="nucleotide sequence ID" value="NC_000961.1"/>
</dbReference>
<dbReference type="SMR" id="O59536"/>
<dbReference type="MINT" id="O59536"/>
<dbReference type="STRING" id="70601.gene:9378890"/>
<dbReference type="EnsemblBacteria" id="BAA31006">
    <property type="protein sequence ID" value="BAA31006"/>
    <property type="gene ID" value="BAA31006"/>
</dbReference>
<dbReference type="GeneID" id="1442726"/>
<dbReference type="KEGG" id="pho:PH1884"/>
<dbReference type="eggNOG" id="arCOG01087">
    <property type="taxonomic scope" value="Archaea"/>
</dbReference>
<dbReference type="OrthoDB" id="9465at2157"/>
<dbReference type="UniPathway" id="UPA00109">
    <property type="reaction ID" value="UER00189"/>
</dbReference>
<dbReference type="UniPathway" id="UPA00138"/>
<dbReference type="Proteomes" id="UP000000752">
    <property type="component" value="Chromosome"/>
</dbReference>
<dbReference type="GO" id="GO:0005829">
    <property type="term" value="C:cytosol"/>
    <property type="evidence" value="ECO:0007669"/>
    <property type="project" value="TreeGrafter"/>
</dbReference>
<dbReference type="GO" id="GO:0004807">
    <property type="term" value="F:triose-phosphate isomerase activity"/>
    <property type="evidence" value="ECO:0007669"/>
    <property type="project" value="UniProtKB-UniRule"/>
</dbReference>
<dbReference type="GO" id="GO:0006094">
    <property type="term" value="P:gluconeogenesis"/>
    <property type="evidence" value="ECO:0007669"/>
    <property type="project" value="UniProtKB-UniRule"/>
</dbReference>
<dbReference type="GO" id="GO:0046166">
    <property type="term" value="P:glyceraldehyde-3-phosphate biosynthetic process"/>
    <property type="evidence" value="ECO:0007669"/>
    <property type="project" value="TreeGrafter"/>
</dbReference>
<dbReference type="GO" id="GO:0019563">
    <property type="term" value="P:glycerol catabolic process"/>
    <property type="evidence" value="ECO:0007669"/>
    <property type="project" value="TreeGrafter"/>
</dbReference>
<dbReference type="GO" id="GO:0006096">
    <property type="term" value="P:glycolytic process"/>
    <property type="evidence" value="ECO:0007669"/>
    <property type="project" value="UniProtKB-UniRule"/>
</dbReference>
<dbReference type="CDD" id="cd00311">
    <property type="entry name" value="TIM"/>
    <property type="match status" value="1"/>
</dbReference>
<dbReference type="FunFam" id="3.20.20.70:FF:000223">
    <property type="entry name" value="Triosephosphate isomerase"/>
    <property type="match status" value="1"/>
</dbReference>
<dbReference type="Gene3D" id="3.20.20.70">
    <property type="entry name" value="Aldolase class I"/>
    <property type="match status" value="1"/>
</dbReference>
<dbReference type="HAMAP" id="MF_00147_A">
    <property type="entry name" value="TIM_A"/>
    <property type="match status" value="1"/>
</dbReference>
<dbReference type="InterPro" id="IPR013785">
    <property type="entry name" value="Aldolase_TIM"/>
</dbReference>
<dbReference type="InterPro" id="IPR035990">
    <property type="entry name" value="TIM_sf"/>
</dbReference>
<dbReference type="InterPro" id="IPR000652">
    <property type="entry name" value="Triosephosphate_isomerase"/>
</dbReference>
<dbReference type="InterPro" id="IPR022891">
    <property type="entry name" value="Triosephosphate_isomerase_arc"/>
</dbReference>
<dbReference type="InterPro" id="IPR020861">
    <property type="entry name" value="Triosephosphate_isomerase_AS"/>
</dbReference>
<dbReference type="NCBIfam" id="NF003302">
    <property type="entry name" value="PRK04302.1"/>
    <property type="match status" value="1"/>
</dbReference>
<dbReference type="NCBIfam" id="TIGR00419">
    <property type="entry name" value="tim"/>
    <property type="match status" value="1"/>
</dbReference>
<dbReference type="PANTHER" id="PTHR21139">
    <property type="entry name" value="TRIOSEPHOSPHATE ISOMERASE"/>
    <property type="match status" value="1"/>
</dbReference>
<dbReference type="PANTHER" id="PTHR21139:SF42">
    <property type="entry name" value="TRIOSEPHOSPHATE ISOMERASE"/>
    <property type="match status" value="1"/>
</dbReference>
<dbReference type="Pfam" id="PF00121">
    <property type="entry name" value="TIM"/>
    <property type="match status" value="1"/>
</dbReference>
<dbReference type="SUPFAM" id="SSF51351">
    <property type="entry name" value="Triosephosphate isomerase (TIM)"/>
    <property type="match status" value="1"/>
</dbReference>
<dbReference type="PROSITE" id="PS00171">
    <property type="entry name" value="TIM_1"/>
    <property type="match status" value="1"/>
</dbReference>
<dbReference type="PROSITE" id="PS51440">
    <property type="entry name" value="TIM_2"/>
    <property type="match status" value="1"/>
</dbReference>
<organism>
    <name type="scientific">Pyrococcus horikoshii (strain ATCC 700860 / DSM 12428 / JCM 9974 / NBRC 100139 / OT-3)</name>
    <dbReference type="NCBI Taxonomy" id="70601"/>
    <lineage>
        <taxon>Archaea</taxon>
        <taxon>Methanobacteriati</taxon>
        <taxon>Methanobacteriota</taxon>
        <taxon>Thermococci</taxon>
        <taxon>Thermococcales</taxon>
        <taxon>Thermococcaceae</taxon>
        <taxon>Pyrococcus</taxon>
    </lineage>
</organism>
<accession>O59536</accession>